<accession>Q85FI3</accession>
<dbReference type="EMBL" id="AY178864">
    <property type="protein sequence ID" value="AAP29430.2"/>
    <property type="molecule type" value="Genomic_DNA"/>
</dbReference>
<dbReference type="RefSeq" id="NP_848099.2">
    <property type="nucleotide sequence ID" value="NC_004766.1"/>
</dbReference>
<dbReference type="SMR" id="Q85FI3"/>
<dbReference type="GeneID" id="807412"/>
<dbReference type="GO" id="GO:0009507">
    <property type="term" value="C:chloroplast"/>
    <property type="evidence" value="ECO:0007669"/>
    <property type="project" value="UniProtKB-SubCell"/>
</dbReference>
<dbReference type="GO" id="GO:0015934">
    <property type="term" value="C:large ribosomal subunit"/>
    <property type="evidence" value="ECO:0007669"/>
    <property type="project" value="InterPro"/>
</dbReference>
<dbReference type="GO" id="GO:0019843">
    <property type="term" value="F:rRNA binding"/>
    <property type="evidence" value="ECO:0007669"/>
    <property type="project" value="UniProtKB-UniRule"/>
</dbReference>
<dbReference type="GO" id="GO:0003735">
    <property type="term" value="F:structural constituent of ribosome"/>
    <property type="evidence" value="ECO:0007669"/>
    <property type="project" value="InterPro"/>
</dbReference>
<dbReference type="GO" id="GO:0006412">
    <property type="term" value="P:translation"/>
    <property type="evidence" value="ECO:0007669"/>
    <property type="project" value="UniProtKB-UniRule"/>
</dbReference>
<dbReference type="CDD" id="cd00336">
    <property type="entry name" value="Ribosomal_L22"/>
    <property type="match status" value="1"/>
</dbReference>
<dbReference type="Gene3D" id="3.90.470.10">
    <property type="entry name" value="Ribosomal protein L22/L17"/>
    <property type="match status" value="1"/>
</dbReference>
<dbReference type="HAMAP" id="MF_01331_B">
    <property type="entry name" value="Ribosomal_uL22_B"/>
    <property type="match status" value="1"/>
</dbReference>
<dbReference type="InterPro" id="IPR001063">
    <property type="entry name" value="Ribosomal_uL22"/>
</dbReference>
<dbReference type="InterPro" id="IPR005727">
    <property type="entry name" value="Ribosomal_uL22_bac/chlpt-type"/>
</dbReference>
<dbReference type="InterPro" id="IPR047867">
    <property type="entry name" value="Ribosomal_uL22_bac/org-type"/>
</dbReference>
<dbReference type="InterPro" id="IPR036394">
    <property type="entry name" value="Ribosomal_uL22_sf"/>
</dbReference>
<dbReference type="NCBIfam" id="TIGR01044">
    <property type="entry name" value="rplV_bact"/>
    <property type="match status" value="1"/>
</dbReference>
<dbReference type="PANTHER" id="PTHR13501">
    <property type="entry name" value="CHLOROPLAST 50S RIBOSOMAL PROTEIN L22-RELATED"/>
    <property type="match status" value="1"/>
</dbReference>
<dbReference type="PANTHER" id="PTHR13501:SF10">
    <property type="entry name" value="LARGE RIBOSOMAL SUBUNIT PROTEIN UL22M"/>
    <property type="match status" value="1"/>
</dbReference>
<dbReference type="Pfam" id="PF00237">
    <property type="entry name" value="Ribosomal_L22"/>
    <property type="match status" value="1"/>
</dbReference>
<dbReference type="SUPFAM" id="SSF54843">
    <property type="entry name" value="Ribosomal protein L22"/>
    <property type="match status" value="1"/>
</dbReference>
<evidence type="ECO:0000250" key="1"/>
<evidence type="ECO:0000269" key="2">
    <source>
    </source>
</evidence>
<evidence type="ECO:0000305" key="3"/>
<gene>
    <name type="primary">rpl22</name>
</gene>
<sequence>MGNVIKSQVGAQALGKNVRVSVTKMQRIIDRIRNCSYEEALVLLEFMPYRACYPVSQLVLSAAANASNNLGLNKSDLFVSKAWVDNSKYLRRFRPRAQGRGYPIKKPTCKVTIQLSSKSIEK</sequence>
<protein>
    <recommendedName>
        <fullName evidence="3">Large ribosomal subunit protein uL22c</fullName>
    </recommendedName>
    <alternativeName>
        <fullName>50S ribosomal protein L22, chloroplastic</fullName>
    </alternativeName>
</protein>
<proteinExistence type="evidence at transcript level"/>
<name>RK22_ADICA</name>
<comment type="function">
    <text evidence="1">This protein binds specifically to 23S rRNA.</text>
</comment>
<comment type="function">
    <text evidence="1">The globular domain of the protein is located near the polypeptide exit tunnel on the outside of the subunit, while an extended beta-hairpin is found that lines the wall of the exit tunnel in the center of the 70S ribosome.</text>
</comment>
<comment type="subunit">
    <text evidence="1">Part of the 50S ribosomal subunit.</text>
</comment>
<comment type="subcellular location">
    <subcellularLocation>
        <location>Plastid</location>
        <location>Chloroplast</location>
    </subcellularLocation>
</comment>
<comment type="RNA editing">
    <location>
        <position position="43" evidence="2"/>
    </location>
    <location>
        <position position="44" evidence="2"/>
    </location>
</comment>
<comment type="similarity">
    <text evidence="3">Belongs to the universal ribosomal protein uL22 family.</text>
</comment>
<geneLocation type="chloroplast"/>
<reference key="1">
    <citation type="journal article" date="2003" name="DNA Res.">
        <title>Complete nucleotide sequence of the chloroplast genome from a leptosporangiate fern, Adiantum capillus-veneris L.</title>
        <authorList>
            <person name="Wolf P.G."/>
            <person name="Rowe C.A."/>
            <person name="Sinclair R.B."/>
            <person name="Hasebe M."/>
        </authorList>
    </citation>
    <scope>NUCLEOTIDE SEQUENCE [LARGE SCALE GENOMIC DNA]</scope>
</reference>
<reference key="2">
    <citation type="journal article" date="2004" name="Gene">
        <title>High levels of RNA editing in a vascular plant chloroplast genome: analysis of transcripts from the fern Adiantum capillus-veneris.</title>
        <authorList>
            <person name="Wolf P.G."/>
            <person name="Rowe C.A."/>
            <person name="Hasebe M."/>
        </authorList>
    </citation>
    <scope>NUCLEOTIDE SEQUENCE [GENOMIC DNA]</scope>
    <scope>RNA EDITING</scope>
</reference>
<keyword id="KW-0150">Chloroplast</keyword>
<keyword id="KW-0934">Plastid</keyword>
<keyword id="KW-0687">Ribonucleoprotein</keyword>
<keyword id="KW-0689">Ribosomal protein</keyword>
<keyword id="KW-0691">RNA editing</keyword>
<keyword id="KW-0694">RNA-binding</keyword>
<keyword id="KW-0699">rRNA-binding</keyword>
<feature type="chain" id="PRO_0000125293" description="Large ribosomal subunit protein uL22c">
    <location>
        <begin position="1"/>
        <end position="122"/>
    </location>
</feature>
<organism>
    <name type="scientific">Adiantum capillus-veneris</name>
    <name type="common">Maidenhair fern</name>
    <dbReference type="NCBI Taxonomy" id="13818"/>
    <lineage>
        <taxon>Eukaryota</taxon>
        <taxon>Viridiplantae</taxon>
        <taxon>Streptophyta</taxon>
        <taxon>Embryophyta</taxon>
        <taxon>Tracheophyta</taxon>
        <taxon>Polypodiopsida</taxon>
        <taxon>Polypodiidae</taxon>
        <taxon>Polypodiales</taxon>
        <taxon>Pteridineae</taxon>
        <taxon>Pteridaceae</taxon>
        <taxon>Vittarioideae</taxon>
        <taxon>Adiantum</taxon>
    </lineage>
</organism>